<comment type="function">
    <text evidence="1">Catalyzes the transfer of the enolpyruvyl moiety of phosphoenolpyruvate (PEP) to the 5-hydroxyl of shikimate-3-phosphate (S3P) to produce enolpyruvyl shikimate-3-phosphate and inorganic phosphate.</text>
</comment>
<comment type="catalytic activity">
    <reaction evidence="1">
        <text>3-phosphoshikimate + phosphoenolpyruvate = 5-O-(1-carboxyvinyl)-3-phosphoshikimate + phosphate</text>
        <dbReference type="Rhea" id="RHEA:21256"/>
        <dbReference type="ChEBI" id="CHEBI:43474"/>
        <dbReference type="ChEBI" id="CHEBI:57701"/>
        <dbReference type="ChEBI" id="CHEBI:58702"/>
        <dbReference type="ChEBI" id="CHEBI:145989"/>
        <dbReference type="EC" id="2.5.1.19"/>
    </reaction>
    <physiologicalReaction direction="left-to-right" evidence="1">
        <dbReference type="Rhea" id="RHEA:21257"/>
    </physiologicalReaction>
</comment>
<comment type="pathway">
    <text evidence="1">Metabolic intermediate biosynthesis; chorismate biosynthesis; chorismate from D-erythrose 4-phosphate and phosphoenolpyruvate: step 6/7.</text>
</comment>
<comment type="subunit">
    <text evidence="1">Monomer.</text>
</comment>
<comment type="subcellular location">
    <subcellularLocation>
        <location evidence="1">Cytoplasm</location>
    </subcellularLocation>
</comment>
<comment type="similarity">
    <text evidence="1">Belongs to the EPSP synthase family.</text>
</comment>
<protein>
    <recommendedName>
        <fullName evidence="1">3-phosphoshikimate 1-carboxyvinyltransferase</fullName>
        <ecNumber evidence="1">2.5.1.19</ecNumber>
    </recommendedName>
    <alternativeName>
        <fullName evidence="1">5-enolpyruvylshikimate-3-phosphate synthase</fullName>
        <shortName evidence="1">EPSP synthase</shortName>
        <shortName evidence="1">EPSPS</shortName>
    </alternativeName>
</protein>
<reference key="1">
    <citation type="submission" date="2009-07" db="EMBL/GenBank/DDBJ databases">
        <title>Complete sequence of Geobacter sp. M21.</title>
        <authorList>
            <consortium name="US DOE Joint Genome Institute"/>
            <person name="Lucas S."/>
            <person name="Copeland A."/>
            <person name="Lapidus A."/>
            <person name="Glavina del Rio T."/>
            <person name="Dalin E."/>
            <person name="Tice H."/>
            <person name="Bruce D."/>
            <person name="Goodwin L."/>
            <person name="Pitluck S."/>
            <person name="Saunders E."/>
            <person name="Brettin T."/>
            <person name="Detter J.C."/>
            <person name="Han C."/>
            <person name="Larimer F."/>
            <person name="Land M."/>
            <person name="Hauser L."/>
            <person name="Kyrpides N."/>
            <person name="Ovchinnikova G."/>
            <person name="Lovley D."/>
        </authorList>
    </citation>
    <scope>NUCLEOTIDE SEQUENCE [LARGE SCALE GENOMIC DNA]</scope>
    <source>
        <strain>M21</strain>
    </source>
</reference>
<accession>C6E2B1</accession>
<keyword id="KW-0028">Amino-acid biosynthesis</keyword>
<keyword id="KW-0057">Aromatic amino acid biosynthesis</keyword>
<keyword id="KW-0963">Cytoplasm</keyword>
<keyword id="KW-0808">Transferase</keyword>
<proteinExistence type="inferred from homology"/>
<organism>
    <name type="scientific">Geobacter sp. (strain M21)</name>
    <dbReference type="NCBI Taxonomy" id="443144"/>
    <lineage>
        <taxon>Bacteria</taxon>
        <taxon>Pseudomonadati</taxon>
        <taxon>Thermodesulfobacteriota</taxon>
        <taxon>Desulfuromonadia</taxon>
        <taxon>Geobacterales</taxon>
        <taxon>Geobacteraceae</taxon>
        <taxon>Geobacter</taxon>
    </lineage>
</organism>
<feature type="chain" id="PRO_1000204164" description="3-phosphoshikimate 1-carboxyvinyltransferase">
    <location>
        <begin position="1"/>
        <end position="429"/>
    </location>
</feature>
<feature type="active site" description="Proton acceptor" evidence="1">
    <location>
        <position position="315"/>
    </location>
</feature>
<feature type="binding site" evidence="1">
    <location>
        <position position="22"/>
    </location>
    <ligand>
        <name>3-phosphoshikimate</name>
        <dbReference type="ChEBI" id="CHEBI:145989"/>
    </ligand>
</feature>
<feature type="binding site" evidence="1">
    <location>
        <position position="22"/>
    </location>
    <ligand>
        <name>phosphoenolpyruvate</name>
        <dbReference type="ChEBI" id="CHEBI:58702"/>
    </ligand>
</feature>
<feature type="binding site" evidence="1">
    <location>
        <position position="23"/>
    </location>
    <ligand>
        <name>3-phosphoshikimate</name>
        <dbReference type="ChEBI" id="CHEBI:145989"/>
    </ligand>
</feature>
<feature type="binding site" evidence="1">
    <location>
        <position position="27"/>
    </location>
    <ligand>
        <name>3-phosphoshikimate</name>
        <dbReference type="ChEBI" id="CHEBI:145989"/>
    </ligand>
</feature>
<feature type="binding site" evidence="1">
    <location>
        <position position="94"/>
    </location>
    <ligand>
        <name>phosphoenolpyruvate</name>
        <dbReference type="ChEBI" id="CHEBI:58702"/>
    </ligand>
</feature>
<feature type="binding site" evidence="1">
    <location>
        <position position="122"/>
    </location>
    <ligand>
        <name>phosphoenolpyruvate</name>
        <dbReference type="ChEBI" id="CHEBI:58702"/>
    </ligand>
</feature>
<feature type="binding site" evidence="1">
    <location>
        <position position="167"/>
    </location>
    <ligand>
        <name>3-phosphoshikimate</name>
        <dbReference type="ChEBI" id="CHEBI:145989"/>
    </ligand>
</feature>
<feature type="binding site" evidence="1">
    <location>
        <position position="169"/>
    </location>
    <ligand>
        <name>3-phosphoshikimate</name>
        <dbReference type="ChEBI" id="CHEBI:145989"/>
    </ligand>
</feature>
<feature type="binding site" evidence="1">
    <location>
        <position position="169"/>
    </location>
    <ligand>
        <name>phosphoenolpyruvate</name>
        <dbReference type="ChEBI" id="CHEBI:58702"/>
    </ligand>
</feature>
<feature type="binding site" evidence="1">
    <location>
        <position position="315"/>
    </location>
    <ligand>
        <name>3-phosphoshikimate</name>
        <dbReference type="ChEBI" id="CHEBI:145989"/>
    </ligand>
</feature>
<feature type="binding site" evidence="1">
    <location>
        <position position="342"/>
    </location>
    <ligand>
        <name>3-phosphoshikimate</name>
        <dbReference type="ChEBI" id="CHEBI:145989"/>
    </ligand>
</feature>
<feature type="binding site" evidence="1">
    <location>
        <position position="346"/>
    </location>
    <ligand>
        <name>phosphoenolpyruvate</name>
        <dbReference type="ChEBI" id="CHEBI:58702"/>
    </ligand>
</feature>
<feature type="binding site" evidence="1">
    <location>
        <position position="388"/>
    </location>
    <ligand>
        <name>phosphoenolpyruvate</name>
        <dbReference type="ChEBI" id="CHEBI:58702"/>
    </ligand>
</feature>
<sequence>MENYTVQPAKSVRGEISVPGDKSISHRSIMFGSISSGVTKVTGFLRGEDALATLQAFRAMGVQIDDDGETVTIQGRGLHGLSEPTDVLDCGNSGTSMRLLTGLLAGQNFFSVLSGDKYLRARPMKRVVGPLALMGARISGRAGGEKAPLAIQGSKLIGIEYDSPVSSAQVKSAIMLAGLYAGGETVVREPHLSRDHSERMLRAFGAHVETFPGGVKVRGGAELTGRDIVVPGDISSAAFFLVAALIVPGSDLLIRGVGVNPTRTGIIDVLKGMGGDLELTNQRDESGEPVADIRVRHSKLTAMEICGEVVPRAIDEFPAICVAASLAQGTTVVRDAAELRVKETDRISAMADNLRRAGVNIVETPDGMQITGVASLKGCAADSFGDHRIAMSMMVAGLVAQGETSVSDVECIATSFPGFVNLLDGVVQR</sequence>
<dbReference type="EC" id="2.5.1.19" evidence="1"/>
<dbReference type="EMBL" id="CP001661">
    <property type="protein sequence ID" value="ACT17057.1"/>
    <property type="molecule type" value="Genomic_DNA"/>
</dbReference>
<dbReference type="SMR" id="C6E2B1"/>
<dbReference type="STRING" id="443144.GM21_0992"/>
<dbReference type="KEGG" id="gem:GM21_0992"/>
<dbReference type="eggNOG" id="COG0128">
    <property type="taxonomic scope" value="Bacteria"/>
</dbReference>
<dbReference type="HOGENOM" id="CLU_024321_0_1_7"/>
<dbReference type="OrthoDB" id="9809920at2"/>
<dbReference type="UniPathway" id="UPA00053">
    <property type="reaction ID" value="UER00089"/>
</dbReference>
<dbReference type="GO" id="GO:0005737">
    <property type="term" value="C:cytoplasm"/>
    <property type="evidence" value="ECO:0007669"/>
    <property type="project" value="UniProtKB-SubCell"/>
</dbReference>
<dbReference type="GO" id="GO:0003866">
    <property type="term" value="F:3-phosphoshikimate 1-carboxyvinyltransferase activity"/>
    <property type="evidence" value="ECO:0007669"/>
    <property type="project" value="UniProtKB-UniRule"/>
</dbReference>
<dbReference type="GO" id="GO:0008652">
    <property type="term" value="P:amino acid biosynthetic process"/>
    <property type="evidence" value="ECO:0007669"/>
    <property type="project" value="UniProtKB-KW"/>
</dbReference>
<dbReference type="GO" id="GO:0009073">
    <property type="term" value="P:aromatic amino acid family biosynthetic process"/>
    <property type="evidence" value="ECO:0007669"/>
    <property type="project" value="UniProtKB-KW"/>
</dbReference>
<dbReference type="GO" id="GO:0009423">
    <property type="term" value="P:chorismate biosynthetic process"/>
    <property type="evidence" value="ECO:0007669"/>
    <property type="project" value="UniProtKB-UniRule"/>
</dbReference>
<dbReference type="CDD" id="cd01556">
    <property type="entry name" value="EPSP_synthase"/>
    <property type="match status" value="1"/>
</dbReference>
<dbReference type="FunFam" id="3.65.10.10:FF:000005">
    <property type="entry name" value="3-phosphoshikimate 1-carboxyvinyltransferase"/>
    <property type="match status" value="1"/>
</dbReference>
<dbReference type="FunFam" id="3.65.10.10:FF:000006">
    <property type="entry name" value="3-phosphoshikimate 1-carboxyvinyltransferase"/>
    <property type="match status" value="1"/>
</dbReference>
<dbReference type="Gene3D" id="3.65.10.10">
    <property type="entry name" value="Enolpyruvate transferase domain"/>
    <property type="match status" value="2"/>
</dbReference>
<dbReference type="HAMAP" id="MF_00210">
    <property type="entry name" value="EPSP_synth"/>
    <property type="match status" value="1"/>
</dbReference>
<dbReference type="InterPro" id="IPR001986">
    <property type="entry name" value="Enolpyruvate_Tfrase_dom"/>
</dbReference>
<dbReference type="InterPro" id="IPR036968">
    <property type="entry name" value="Enolpyruvate_Tfrase_sf"/>
</dbReference>
<dbReference type="InterPro" id="IPR006264">
    <property type="entry name" value="EPSP_synthase"/>
</dbReference>
<dbReference type="InterPro" id="IPR023193">
    <property type="entry name" value="EPSP_synthase_CS"/>
</dbReference>
<dbReference type="InterPro" id="IPR013792">
    <property type="entry name" value="RNA3'P_cycl/enolpyr_Trfase_a/b"/>
</dbReference>
<dbReference type="NCBIfam" id="TIGR01356">
    <property type="entry name" value="aroA"/>
    <property type="match status" value="1"/>
</dbReference>
<dbReference type="PANTHER" id="PTHR21090">
    <property type="entry name" value="AROM/DEHYDROQUINATE SYNTHASE"/>
    <property type="match status" value="1"/>
</dbReference>
<dbReference type="PANTHER" id="PTHR21090:SF5">
    <property type="entry name" value="PENTAFUNCTIONAL AROM POLYPEPTIDE"/>
    <property type="match status" value="1"/>
</dbReference>
<dbReference type="Pfam" id="PF00275">
    <property type="entry name" value="EPSP_synthase"/>
    <property type="match status" value="1"/>
</dbReference>
<dbReference type="PIRSF" id="PIRSF000505">
    <property type="entry name" value="EPSPS"/>
    <property type="match status" value="1"/>
</dbReference>
<dbReference type="SUPFAM" id="SSF55205">
    <property type="entry name" value="EPT/RTPC-like"/>
    <property type="match status" value="1"/>
</dbReference>
<dbReference type="PROSITE" id="PS00104">
    <property type="entry name" value="EPSP_SYNTHASE_1"/>
    <property type="match status" value="1"/>
</dbReference>
<dbReference type="PROSITE" id="PS00885">
    <property type="entry name" value="EPSP_SYNTHASE_2"/>
    <property type="match status" value="1"/>
</dbReference>
<name>AROA_GEOSM</name>
<evidence type="ECO:0000255" key="1">
    <source>
        <dbReference type="HAMAP-Rule" id="MF_00210"/>
    </source>
</evidence>
<gene>
    <name evidence="1" type="primary">aroA</name>
    <name type="ordered locus">GM21_0992</name>
</gene>